<protein>
    <recommendedName>
        <fullName evidence="1">Methylthioribose kinase</fullName>
        <shortName evidence="1">MTR kinase</shortName>
        <ecNumber evidence="1">2.7.1.100</ecNumber>
    </recommendedName>
</protein>
<keyword id="KW-0028">Amino-acid biosynthesis</keyword>
<keyword id="KW-0067">ATP-binding</keyword>
<keyword id="KW-0418">Kinase</keyword>
<keyword id="KW-0486">Methionine biosynthesis</keyword>
<keyword id="KW-0547">Nucleotide-binding</keyword>
<keyword id="KW-0808">Transferase</keyword>
<gene>
    <name evidence="1" type="primary">mtnK</name>
    <name type="ordered locus">YpsIP31758_3178</name>
</gene>
<reference key="1">
    <citation type="journal article" date="2007" name="PLoS Genet.">
        <title>The complete genome sequence of Yersinia pseudotuberculosis IP31758, the causative agent of Far East scarlet-like fever.</title>
        <authorList>
            <person name="Eppinger M."/>
            <person name="Rosovitz M.J."/>
            <person name="Fricke W.F."/>
            <person name="Rasko D.A."/>
            <person name="Kokorina G."/>
            <person name="Fayolle C."/>
            <person name="Lindler L.E."/>
            <person name="Carniel E."/>
            <person name="Ravel J."/>
        </authorList>
    </citation>
    <scope>NUCLEOTIDE SEQUENCE [LARGE SCALE GENOMIC DNA]</scope>
    <source>
        <strain>IP 31758</strain>
    </source>
</reference>
<sequence>MSRYHTFTAADAVEYARQFGQVADPQALVTADEIGDGNLNLVFKIRDTAGISRVIVKQALPYVRCVGESWPLTLDRARIEAETLLTHSQFCPQHTVKVLHHDAELAVMVQEDLSDHHIWRHELIQGNYYPQAAEQLGEYLAQTLFHTSDFYQSAQAKKAAVSRYTNPELCQITEDLFFTDPYIDHERNNFDPVLLPEVLSLRQDKALKLAVASLKHRFLSQAEALLHGDIHSGSIFVADGRLKTIDAEFGFYGPIGFDIGTALGNLLLNYCGLPGLAGPRDAAAGREQRLKDVQTVWQTFAARFLALSQEKAQDPALATEGYAAQFLQHVWRDAIGYCGSELIRRTIGLAHVADLDSIDDEEMRRACQRHALSLGRALILVAPHVDDVGGVVARIRQSPSSLTPQRC</sequence>
<accession>A7FLL0</accession>
<organism>
    <name type="scientific">Yersinia pseudotuberculosis serotype O:1b (strain IP 31758)</name>
    <dbReference type="NCBI Taxonomy" id="349747"/>
    <lineage>
        <taxon>Bacteria</taxon>
        <taxon>Pseudomonadati</taxon>
        <taxon>Pseudomonadota</taxon>
        <taxon>Gammaproteobacteria</taxon>
        <taxon>Enterobacterales</taxon>
        <taxon>Yersiniaceae</taxon>
        <taxon>Yersinia</taxon>
    </lineage>
</organism>
<proteinExistence type="inferred from homology"/>
<name>MTNK_YERP3</name>
<comment type="function">
    <text evidence="1">Catalyzes the phosphorylation of methylthioribose into methylthioribose-1-phosphate.</text>
</comment>
<comment type="catalytic activity">
    <reaction evidence="1">
        <text>5-(methylsulfanyl)-D-ribose + ATP = 5-(methylsulfanyl)-alpha-D-ribose 1-phosphate + ADP + H(+)</text>
        <dbReference type="Rhea" id="RHEA:22312"/>
        <dbReference type="ChEBI" id="CHEBI:15378"/>
        <dbReference type="ChEBI" id="CHEBI:30616"/>
        <dbReference type="ChEBI" id="CHEBI:58533"/>
        <dbReference type="ChEBI" id="CHEBI:78440"/>
        <dbReference type="ChEBI" id="CHEBI:456216"/>
        <dbReference type="EC" id="2.7.1.100"/>
    </reaction>
</comment>
<comment type="pathway">
    <text evidence="1">Amino-acid biosynthesis; L-methionine biosynthesis via salvage pathway; S-methyl-5-thio-alpha-D-ribose 1-phosphate from S-methyl-5'-thioadenosine (hydrolase route): step 2/2.</text>
</comment>
<comment type="subunit">
    <text evidence="1">Homodimer.</text>
</comment>
<comment type="similarity">
    <text evidence="1">Belongs to the methylthioribose kinase family.</text>
</comment>
<feature type="chain" id="PRO_0000357354" description="Methylthioribose kinase">
    <location>
        <begin position="1"/>
        <end position="407"/>
    </location>
</feature>
<feature type="binding site" evidence="1">
    <location>
        <position position="40"/>
    </location>
    <ligand>
        <name>ATP</name>
        <dbReference type="ChEBI" id="CHEBI:30616"/>
    </ligand>
</feature>
<feature type="binding site" evidence="1">
    <location>
        <position position="57"/>
    </location>
    <ligand>
        <name>ATP</name>
        <dbReference type="ChEBI" id="CHEBI:30616"/>
    </ligand>
</feature>
<feature type="binding site" evidence="1">
    <location>
        <begin position="111"/>
        <end position="113"/>
    </location>
    <ligand>
        <name>ATP</name>
        <dbReference type="ChEBI" id="CHEBI:30616"/>
    </ligand>
</feature>
<feature type="binding site" evidence="1">
    <location>
        <position position="229"/>
    </location>
    <ligand>
        <name>substrate</name>
    </ligand>
</feature>
<feature type="binding site" evidence="1">
    <location>
        <begin position="246"/>
        <end position="248"/>
    </location>
    <ligand>
        <name>ATP</name>
        <dbReference type="ChEBI" id="CHEBI:30616"/>
    </ligand>
</feature>
<feature type="binding site" evidence="1">
    <location>
        <position position="344"/>
    </location>
    <ligand>
        <name>substrate</name>
    </ligand>
</feature>
<dbReference type="EC" id="2.7.1.100" evidence="1"/>
<dbReference type="EMBL" id="CP000720">
    <property type="protein sequence ID" value="ABS46372.1"/>
    <property type="molecule type" value="Genomic_DNA"/>
</dbReference>
<dbReference type="RefSeq" id="WP_012105601.1">
    <property type="nucleotide sequence ID" value="NC_009708.1"/>
</dbReference>
<dbReference type="SMR" id="A7FLL0"/>
<dbReference type="KEGG" id="ypi:YpsIP31758_3178"/>
<dbReference type="HOGENOM" id="CLU_033681_0_0_6"/>
<dbReference type="UniPathway" id="UPA00904">
    <property type="reaction ID" value="UER00872"/>
</dbReference>
<dbReference type="Proteomes" id="UP000002412">
    <property type="component" value="Chromosome"/>
</dbReference>
<dbReference type="GO" id="GO:0005524">
    <property type="term" value="F:ATP binding"/>
    <property type="evidence" value="ECO:0007669"/>
    <property type="project" value="UniProtKB-UniRule"/>
</dbReference>
<dbReference type="GO" id="GO:0046522">
    <property type="term" value="F:S-methyl-5-thioribose kinase activity"/>
    <property type="evidence" value="ECO:0007669"/>
    <property type="project" value="UniProtKB-UniRule"/>
</dbReference>
<dbReference type="GO" id="GO:0019509">
    <property type="term" value="P:L-methionine salvage from methylthioadenosine"/>
    <property type="evidence" value="ECO:0007669"/>
    <property type="project" value="UniProtKB-UniRule"/>
</dbReference>
<dbReference type="Gene3D" id="3.90.1200.10">
    <property type="match status" value="1"/>
</dbReference>
<dbReference type="Gene3D" id="3.30.200.20">
    <property type="entry name" value="Phosphorylase Kinase, domain 1"/>
    <property type="match status" value="1"/>
</dbReference>
<dbReference type="HAMAP" id="MF_01683">
    <property type="entry name" value="Salvage_MtnK"/>
    <property type="match status" value="1"/>
</dbReference>
<dbReference type="InterPro" id="IPR002575">
    <property type="entry name" value="Aminoglycoside_PTrfase"/>
</dbReference>
<dbReference type="InterPro" id="IPR011009">
    <property type="entry name" value="Kinase-like_dom_sf"/>
</dbReference>
<dbReference type="InterPro" id="IPR009212">
    <property type="entry name" value="Methylthioribose_kinase"/>
</dbReference>
<dbReference type="NCBIfam" id="TIGR01767">
    <property type="entry name" value="MTRK"/>
    <property type="match status" value="1"/>
</dbReference>
<dbReference type="PANTHER" id="PTHR34273">
    <property type="entry name" value="METHYLTHIORIBOSE KINASE"/>
    <property type="match status" value="1"/>
</dbReference>
<dbReference type="PANTHER" id="PTHR34273:SF2">
    <property type="entry name" value="METHYLTHIORIBOSE KINASE"/>
    <property type="match status" value="1"/>
</dbReference>
<dbReference type="Pfam" id="PF01636">
    <property type="entry name" value="APH"/>
    <property type="match status" value="1"/>
</dbReference>
<dbReference type="PIRSF" id="PIRSF031134">
    <property type="entry name" value="MTRK"/>
    <property type="match status" value="1"/>
</dbReference>
<dbReference type="SUPFAM" id="SSF56112">
    <property type="entry name" value="Protein kinase-like (PK-like)"/>
    <property type="match status" value="1"/>
</dbReference>
<evidence type="ECO:0000255" key="1">
    <source>
        <dbReference type="HAMAP-Rule" id="MF_01683"/>
    </source>
</evidence>